<feature type="chain" id="PRO_0000255502" description="Small ribosomal subunit protein uS15">
    <location>
        <begin position="1"/>
        <end position="89"/>
    </location>
</feature>
<dbReference type="EMBL" id="CP000233">
    <property type="protein sequence ID" value="ABD99448.1"/>
    <property type="molecule type" value="Genomic_DNA"/>
</dbReference>
<dbReference type="RefSeq" id="WP_003701713.1">
    <property type="nucleotide sequence ID" value="NC_007929.1"/>
</dbReference>
<dbReference type="RefSeq" id="YP_535531.1">
    <property type="nucleotide sequence ID" value="NC_007929.1"/>
</dbReference>
<dbReference type="SMR" id="Q1WU87"/>
<dbReference type="STRING" id="362948.LSL_0638"/>
<dbReference type="GeneID" id="89465430"/>
<dbReference type="KEGG" id="lsl:LSL_0638"/>
<dbReference type="PATRIC" id="fig|362948.14.peg.718"/>
<dbReference type="HOGENOM" id="CLU_148518_0_0_9"/>
<dbReference type="OrthoDB" id="9799262at2"/>
<dbReference type="Proteomes" id="UP000006559">
    <property type="component" value="Chromosome"/>
</dbReference>
<dbReference type="GO" id="GO:0022627">
    <property type="term" value="C:cytosolic small ribosomal subunit"/>
    <property type="evidence" value="ECO:0007669"/>
    <property type="project" value="TreeGrafter"/>
</dbReference>
<dbReference type="GO" id="GO:0019843">
    <property type="term" value="F:rRNA binding"/>
    <property type="evidence" value="ECO:0007669"/>
    <property type="project" value="UniProtKB-UniRule"/>
</dbReference>
<dbReference type="GO" id="GO:0003735">
    <property type="term" value="F:structural constituent of ribosome"/>
    <property type="evidence" value="ECO:0007669"/>
    <property type="project" value="InterPro"/>
</dbReference>
<dbReference type="GO" id="GO:0006412">
    <property type="term" value="P:translation"/>
    <property type="evidence" value="ECO:0007669"/>
    <property type="project" value="UniProtKB-UniRule"/>
</dbReference>
<dbReference type="CDD" id="cd00353">
    <property type="entry name" value="Ribosomal_S15p_S13e"/>
    <property type="match status" value="1"/>
</dbReference>
<dbReference type="FunFam" id="1.10.287.10:FF:000002">
    <property type="entry name" value="30S ribosomal protein S15"/>
    <property type="match status" value="1"/>
</dbReference>
<dbReference type="Gene3D" id="6.10.250.3130">
    <property type="match status" value="1"/>
</dbReference>
<dbReference type="Gene3D" id="1.10.287.10">
    <property type="entry name" value="S15/NS1, RNA-binding"/>
    <property type="match status" value="1"/>
</dbReference>
<dbReference type="HAMAP" id="MF_01343_B">
    <property type="entry name" value="Ribosomal_uS15_B"/>
    <property type="match status" value="1"/>
</dbReference>
<dbReference type="InterPro" id="IPR000589">
    <property type="entry name" value="Ribosomal_uS15"/>
</dbReference>
<dbReference type="InterPro" id="IPR005290">
    <property type="entry name" value="Ribosomal_uS15_bac-type"/>
</dbReference>
<dbReference type="InterPro" id="IPR009068">
    <property type="entry name" value="uS15_NS1_RNA-bd_sf"/>
</dbReference>
<dbReference type="NCBIfam" id="TIGR00952">
    <property type="entry name" value="S15_bact"/>
    <property type="match status" value="1"/>
</dbReference>
<dbReference type="PANTHER" id="PTHR23321">
    <property type="entry name" value="RIBOSOMAL PROTEIN S15, BACTERIAL AND ORGANELLAR"/>
    <property type="match status" value="1"/>
</dbReference>
<dbReference type="PANTHER" id="PTHR23321:SF26">
    <property type="entry name" value="SMALL RIBOSOMAL SUBUNIT PROTEIN US15M"/>
    <property type="match status" value="1"/>
</dbReference>
<dbReference type="Pfam" id="PF00312">
    <property type="entry name" value="Ribosomal_S15"/>
    <property type="match status" value="1"/>
</dbReference>
<dbReference type="SMART" id="SM01387">
    <property type="entry name" value="Ribosomal_S15"/>
    <property type="match status" value="1"/>
</dbReference>
<dbReference type="SUPFAM" id="SSF47060">
    <property type="entry name" value="S15/NS1 RNA-binding domain"/>
    <property type="match status" value="1"/>
</dbReference>
<dbReference type="PROSITE" id="PS00362">
    <property type="entry name" value="RIBOSOMAL_S15"/>
    <property type="match status" value="1"/>
</dbReference>
<organism>
    <name type="scientific">Ligilactobacillus salivarius (strain UCC118)</name>
    <name type="common">Lactobacillus salivarius</name>
    <dbReference type="NCBI Taxonomy" id="362948"/>
    <lineage>
        <taxon>Bacteria</taxon>
        <taxon>Bacillati</taxon>
        <taxon>Bacillota</taxon>
        <taxon>Bacilli</taxon>
        <taxon>Lactobacillales</taxon>
        <taxon>Lactobacillaceae</taxon>
        <taxon>Ligilactobacillus</taxon>
    </lineage>
</organism>
<keyword id="KW-1185">Reference proteome</keyword>
<keyword id="KW-0687">Ribonucleoprotein</keyword>
<keyword id="KW-0689">Ribosomal protein</keyword>
<keyword id="KW-0694">RNA-binding</keyword>
<keyword id="KW-0699">rRNA-binding</keyword>
<accession>Q1WU87</accession>
<comment type="function">
    <text evidence="1">One of the primary rRNA binding proteins, it binds directly to 16S rRNA where it helps nucleate assembly of the platform of the 30S subunit by binding and bridging several RNA helices of the 16S rRNA.</text>
</comment>
<comment type="function">
    <text evidence="1">Forms an intersubunit bridge (bridge B4) with the 23S rRNA of the 50S subunit in the ribosome.</text>
</comment>
<comment type="subunit">
    <text evidence="1">Part of the 30S ribosomal subunit. Forms a bridge to the 50S subunit in the 70S ribosome, contacting the 23S rRNA.</text>
</comment>
<comment type="similarity">
    <text evidence="1">Belongs to the universal ribosomal protein uS15 family.</text>
</comment>
<name>RS15_LIGS1</name>
<sequence length="89" mass="10368">MAISQEKKNEIMKKYARHEGDTGSAEVQIAVLTADINELNDHIKAHKKDYASYRGLMKKIGHRRNLLAYLRNTDVQRYRELVKSLGLRR</sequence>
<protein>
    <recommendedName>
        <fullName evidence="1">Small ribosomal subunit protein uS15</fullName>
    </recommendedName>
    <alternativeName>
        <fullName evidence="2">30S ribosomal protein S15</fullName>
    </alternativeName>
</protein>
<evidence type="ECO:0000255" key="1">
    <source>
        <dbReference type="HAMAP-Rule" id="MF_01343"/>
    </source>
</evidence>
<evidence type="ECO:0000305" key="2"/>
<proteinExistence type="inferred from homology"/>
<reference key="1">
    <citation type="journal article" date="2006" name="Proc. Natl. Acad. Sci. U.S.A.">
        <title>Multireplicon genome architecture of Lactobacillus salivarius.</title>
        <authorList>
            <person name="Claesson M.J."/>
            <person name="Li Y."/>
            <person name="Leahy S."/>
            <person name="Canchaya C."/>
            <person name="van Pijkeren J.P."/>
            <person name="Cerdeno-Tarraga A.M."/>
            <person name="Parkhill J."/>
            <person name="Flynn S."/>
            <person name="O'Sullivan G.C."/>
            <person name="Collins J.K."/>
            <person name="Higgins D."/>
            <person name="Shanahan F."/>
            <person name="Fitzgerald G.F."/>
            <person name="van Sinderen D."/>
            <person name="O'Toole P.W."/>
        </authorList>
    </citation>
    <scope>NUCLEOTIDE SEQUENCE [LARGE SCALE GENOMIC DNA]</scope>
    <source>
        <strain>UCC118</strain>
    </source>
</reference>
<gene>
    <name evidence="1" type="primary">rpsO</name>
    <name type="ordered locus">LSL_0638</name>
</gene>